<evidence type="ECO:0000255" key="1">
    <source>
        <dbReference type="HAMAP-Rule" id="MF_00073"/>
    </source>
</evidence>
<keyword id="KW-0694">RNA-binding</keyword>
<keyword id="KW-0804">Transcription</keyword>
<keyword id="KW-0889">Transcription antitermination</keyword>
<keyword id="KW-0805">Transcription regulation</keyword>
<comment type="function">
    <text evidence="1">Involved in transcription antitermination. Required for transcription of ribosomal RNA (rRNA) genes. Binds specifically to the boxA antiterminator sequence of the ribosomal RNA (rrn) operons.</text>
</comment>
<comment type="similarity">
    <text evidence="1">Belongs to the NusB family.</text>
</comment>
<accession>A9N8T6</accession>
<feature type="chain" id="PRO_1000075185" description="Transcription antitermination protein NusB">
    <location>
        <begin position="1"/>
        <end position="138"/>
    </location>
</feature>
<protein>
    <recommendedName>
        <fullName evidence="1">Transcription antitermination protein NusB</fullName>
    </recommendedName>
    <alternativeName>
        <fullName evidence="1">Antitermination factor NusB</fullName>
    </alternativeName>
</protein>
<name>NUSB_COXBR</name>
<proteinExistence type="inferred from homology"/>
<sequence>MINKTRHNARRYALQALYQWFFCETKPDALISQFMEEHDLSDTDVAYFKEVVTGTIQHVAIIDELMTAHLDRKISALNPVELSVLRLSIYELLHRKEVPYKVVIDEALELVKEFGAEAGHKYVNAILDVLSSEIRKGV</sequence>
<gene>
    <name evidence="1" type="primary">nusB</name>
    <name type="ordered locus">COXBURSA331_A1578</name>
</gene>
<reference key="1">
    <citation type="submission" date="2007-11" db="EMBL/GenBank/DDBJ databases">
        <title>Genome sequencing of phylogenetically and phenotypically diverse Coxiella burnetii isolates.</title>
        <authorList>
            <person name="Seshadri R."/>
            <person name="Samuel J.E."/>
        </authorList>
    </citation>
    <scope>NUCLEOTIDE SEQUENCE [LARGE SCALE GENOMIC DNA]</scope>
    <source>
        <strain>RSA 331 / Henzerling II</strain>
    </source>
</reference>
<organism>
    <name type="scientific">Coxiella burnetii (strain RSA 331 / Henzerling II)</name>
    <dbReference type="NCBI Taxonomy" id="360115"/>
    <lineage>
        <taxon>Bacteria</taxon>
        <taxon>Pseudomonadati</taxon>
        <taxon>Pseudomonadota</taxon>
        <taxon>Gammaproteobacteria</taxon>
        <taxon>Legionellales</taxon>
        <taxon>Coxiellaceae</taxon>
        <taxon>Coxiella</taxon>
    </lineage>
</organism>
<dbReference type="EMBL" id="CP000890">
    <property type="protein sequence ID" value="ABX77320.1"/>
    <property type="molecule type" value="Genomic_DNA"/>
</dbReference>
<dbReference type="RefSeq" id="WP_010958215.1">
    <property type="nucleotide sequence ID" value="NC_010117.1"/>
</dbReference>
<dbReference type="SMR" id="A9N8T6"/>
<dbReference type="KEGG" id="cbs:COXBURSA331_A1578"/>
<dbReference type="HOGENOM" id="CLU_087843_4_1_6"/>
<dbReference type="GO" id="GO:0005829">
    <property type="term" value="C:cytosol"/>
    <property type="evidence" value="ECO:0007669"/>
    <property type="project" value="TreeGrafter"/>
</dbReference>
<dbReference type="GO" id="GO:0003723">
    <property type="term" value="F:RNA binding"/>
    <property type="evidence" value="ECO:0007669"/>
    <property type="project" value="UniProtKB-UniRule"/>
</dbReference>
<dbReference type="GO" id="GO:0006353">
    <property type="term" value="P:DNA-templated transcription termination"/>
    <property type="evidence" value="ECO:0007669"/>
    <property type="project" value="UniProtKB-UniRule"/>
</dbReference>
<dbReference type="GO" id="GO:0031564">
    <property type="term" value="P:transcription antitermination"/>
    <property type="evidence" value="ECO:0007669"/>
    <property type="project" value="UniProtKB-KW"/>
</dbReference>
<dbReference type="FunFam" id="1.10.940.10:FF:000001">
    <property type="entry name" value="Transcription antitermination factor NusB"/>
    <property type="match status" value="1"/>
</dbReference>
<dbReference type="Gene3D" id="1.10.940.10">
    <property type="entry name" value="NusB-like"/>
    <property type="match status" value="1"/>
</dbReference>
<dbReference type="HAMAP" id="MF_00073">
    <property type="entry name" value="NusB"/>
    <property type="match status" value="1"/>
</dbReference>
<dbReference type="InterPro" id="IPR035926">
    <property type="entry name" value="NusB-like_sf"/>
</dbReference>
<dbReference type="InterPro" id="IPR011605">
    <property type="entry name" value="NusB_fam"/>
</dbReference>
<dbReference type="InterPro" id="IPR006027">
    <property type="entry name" value="NusB_RsmB_TIM44"/>
</dbReference>
<dbReference type="NCBIfam" id="TIGR01951">
    <property type="entry name" value="nusB"/>
    <property type="match status" value="1"/>
</dbReference>
<dbReference type="PANTHER" id="PTHR11078:SF3">
    <property type="entry name" value="ANTITERMINATION NUSB DOMAIN-CONTAINING PROTEIN"/>
    <property type="match status" value="1"/>
</dbReference>
<dbReference type="PANTHER" id="PTHR11078">
    <property type="entry name" value="N UTILIZATION SUBSTANCE PROTEIN B-RELATED"/>
    <property type="match status" value="1"/>
</dbReference>
<dbReference type="Pfam" id="PF01029">
    <property type="entry name" value="NusB"/>
    <property type="match status" value="1"/>
</dbReference>
<dbReference type="SUPFAM" id="SSF48013">
    <property type="entry name" value="NusB-like"/>
    <property type="match status" value="1"/>
</dbReference>